<comment type="function">
    <text evidence="1">Catalyzes the reversible oxidation of malate to oxaloacetate.</text>
</comment>
<comment type="catalytic activity">
    <reaction evidence="1">
        <text>(S)-malate + NAD(+) = oxaloacetate + NADH + H(+)</text>
        <dbReference type="Rhea" id="RHEA:21432"/>
        <dbReference type="ChEBI" id="CHEBI:15378"/>
        <dbReference type="ChEBI" id="CHEBI:15589"/>
        <dbReference type="ChEBI" id="CHEBI:16452"/>
        <dbReference type="ChEBI" id="CHEBI:57540"/>
        <dbReference type="ChEBI" id="CHEBI:57945"/>
        <dbReference type="EC" id="1.1.1.37"/>
    </reaction>
</comment>
<comment type="similarity">
    <text evidence="1">Belongs to the LDH/MDH superfamily. MDH type 2 family.</text>
</comment>
<name>MDH_LEPCP</name>
<dbReference type="EC" id="1.1.1.37" evidence="1"/>
<dbReference type="EMBL" id="CP001013">
    <property type="protein sequence ID" value="ACB34973.1"/>
    <property type="molecule type" value="Genomic_DNA"/>
</dbReference>
<dbReference type="RefSeq" id="WP_012347727.1">
    <property type="nucleotide sequence ID" value="NC_010524.1"/>
</dbReference>
<dbReference type="SMR" id="B1Y8A3"/>
<dbReference type="STRING" id="395495.Lcho_2708"/>
<dbReference type="KEGG" id="lch:Lcho_2708"/>
<dbReference type="eggNOG" id="COG0039">
    <property type="taxonomic scope" value="Bacteria"/>
</dbReference>
<dbReference type="HOGENOM" id="CLU_040727_2_0_4"/>
<dbReference type="OrthoDB" id="9802969at2"/>
<dbReference type="Proteomes" id="UP000001693">
    <property type="component" value="Chromosome"/>
</dbReference>
<dbReference type="GO" id="GO:0030060">
    <property type="term" value="F:L-malate dehydrogenase (NAD+) activity"/>
    <property type="evidence" value="ECO:0007669"/>
    <property type="project" value="UniProtKB-UniRule"/>
</dbReference>
<dbReference type="GO" id="GO:0006108">
    <property type="term" value="P:malate metabolic process"/>
    <property type="evidence" value="ECO:0007669"/>
    <property type="project" value="InterPro"/>
</dbReference>
<dbReference type="GO" id="GO:0006099">
    <property type="term" value="P:tricarboxylic acid cycle"/>
    <property type="evidence" value="ECO:0007669"/>
    <property type="project" value="UniProtKB-UniRule"/>
</dbReference>
<dbReference type="CDD" id="cd01338">
    <property type="entry name" value="MDH_chloroplast-like"/>
    <property type="match status" value="1"/>
</dbReference>
<dbReference type="FunFam" id="3.40.50.720:FF:000010">
    <property type="entry name" value="Malate dehydrogenase"/>
    <property type="match status" value="1"/>
</dbReference>
<dbReference type="FunFam" id="3.90.110.10:FF:000002">
    <property type="entry name" value="Malate dehydrogenase"/>
    <property type="match status" value="1"/>
</dbReference>
<dbReference type="Gene3D" id="3.90.110.10">
    <property type="entry name" value="Lactate dehydrogenase/glycoside hydrolase, family 4, C-terminal"/>
    <property type="match status" value="1"/>
</dbReference>
<dbReference type="Gene3D" id="3.40.50.720">
    <property type="entry name" value="NAD(P)-binding Rossmann-like Domain"/>
    <property type="match status" value="1"/>
</dbReference>
<dbReference type="HAMAP" id="MF_01517">
    <property type="entry name" value="Malate_dehydrog_2"/>
    <property type="match status" value="1"/>
</dbReference>
<dbReference type="InterPro" id="IPR001557">
    <property type="entry name" value="L-lactate/malate_DH"/>
</dbReference>
<dbReference type="InterPro" id="IPR022383">
    <property type="entry name" value="Lactate/malate_DH_C"/>
</dbReference>
<dbReference type="InterPro" id="IPR001236">
    <property type="entry name" value="Lactate/malate_DH_N"/>
</dbReference>
<dbReference type="InterPro" id="IPR015955">
    <property type="entry name" value="Lactate_DH/Glyco_Ohase_4_C"/>
</dbReference>
<dbReference type="InterPro" id="IPR010945">
    <property type="entry name" value="Malate_DH_type2"/>
</dbReference>
<dbReference type="InterPro" id="IPR036291">
    <property type="entry name" value="NAD(P)-bd_dom_sf"/>
</dbReference>
<dbReference type="NCBIfam" id="TIGR01759">
    <property type="entry name" value="MalateDH-SF1"/>
    <property type="match status" value="1"/>
</dbReference>
<dbReference type="NCBIfam" id="NF003916">
    <property type="entry name" value="PRK05442.1"/>
    <property type="match status" value="1"/>
</dbReference>
<dbReference type="PANTHER" id="PTHR23382">
    <property type="entry name" value="MALATE DEHYDROGENASE"/>
    <property type="match status" value="1"/>
</dbReference>
<dbReference type="Pfam" id="PF02866">
    <property type="entry name" value="Ldh_1_C"/>
    <property type="match status" value="1"/>
</dbReference>
<dbReference type="Pfam" id="PF00056">
    <property type="entry name" value="Ldh_1_N"/>
    <property type="match status" value="1"/>
</dbReference>
<dbReference type="PIRSF" id="PIRSF000102">
    <property type="entry name" value="Lac_mal_DH"/>
    <property type="match status" value="1"/>
</dbReference>
<dbReference type="SUPFAM" id="SSF56327">
    <property type="entry name" value="LDH C-terminal domain-like"/>
    <property type="match status" value="1"/>
</dbReference>
<dbReference type="SUPFAM" id="SSF51735">
    <property type="entry name" value="NAD(P)-binding Rossmann-fold domains"/>
    <property type="match status" value="1"/>
</dbReference>
<evidence type="ECO:0000255" key="1">
    <source>
        <dbReference type="HAMAP-Rule" id="MF_01517"/>
    </source>
</evidence>
<accession>B1Y8A3</accession>
<protein>
    <recommendedName>
        <fullName evidence="1">Malate dehydrogenase</fullName>
        <ecNumber evidence="1">1.1.1.37</ecNumber>
    </recommendedName>
</protein>
<keyword id="KW-0520">NAD</keyword>
<keyword id="KW-0560">Oxidoreductase</keyword>
<keyword id="KW-1185">Reference proteome</keyword>
<keyword id="KW-0816">Tricarboxylic acid cycle</keyword>
<gene>
    <name evidence="1" type="primary">mdh</name>
    <name type="ordered locus">Lcho_2708</name>
</gene>
<sequence length="328" mass="34770">MSKSPVRVAVTGAAGQIGYALLFRIASGEMLGKDQPVILQLLEVPVEKAQEALKGVIMELEDCAFPLLAGIEAHSDPMTAFKDTDYALLVGARPRGPGMERADLLAANAQIFTAQGKALNAVASRNVKVLVVGNPANTNAYIAMKSAPDLPAKNFTAMLRLDHNRAASQIAAKTGKPVASIEKLAVWGNHSPTMYADYRFATIGGESVKDMINDDVWNRDVFLPTVGKRGAAIIAARGVSSAASAANAAIDHMRDWALGTNGAWVTMGVPSKGEYGIPAETMFGYPVTCEGGEYKIVEGLPIDAFSQECINKTLAELEGEKDGVKHLL</sequence>
<organism>
    <name type="scientific">Leptothrix cholodnii (strain ATCC 51168 / LMG 8142 / SP-6)</name>
    <name type="common">Leptothrix discophora (strain SP-6)</name>
    <dbReference type="NCBI Taxonomy" id="395495"/>
    <lineage>
        <taxon>Bacteria</taxon>
        <taxon>Pseudomonadati</taxon>
        <taxon>Pseudomonadota</taxon>
        <taxon>Betaproteobacteria</taxon>
        <taxon>Burkholderiales</taxon>
        <taxon>Sphaerotilaceae</taxon>
        <taxon>Leptothrix</taxon>
    </lineage>
</organism>
<reference key="1">
    <citation type="submission" date="2008-03" db="EMBL/GenBank/DDBJ databases">
        <title>Complete sequence of Leptothrix cholodnii SP-6.</title>
        <authorList>
            <consortium name="US DOE Joint Genome Institute"/>
            <person name="Copeland A."/>
            <person name="Lucas S."/>
            <person name="Lapidus A."/>
            <person name="Glavina del Rio T."/>
            <person name="Dalin E."/>
            <person name="Tice H."/>
            <person name="Bruce D."/>
            <person name="Goodwin L."/>
            <person name="Pitluck S."/>
            <person name="Chertkov O."/>
            <person name="Brettin T."/>
            <person name="Detter J.C."/>
            <person name="Han C."/>
            <person name="Kuske C.R."/>
            <person name="Schmutz J."/>
            <person name="Larimer F."/>
            <person name="Land M."/>
            <person name="Hauser L."/>
            <person name="Kyrpides N."/>
            <person name="Lykidis A."/>
            <person name="Emerson D."/>
            <person name="Richardson P."/>
        </authorList>
    </citation>
    <scope>NUCLEOTIDE SEQUENCE [LARGE SCALE GENOMIC DNA]</scope>
    <source>
        <strain>ATCC 51168 / LMG 8142 / SP-6</strain>
    </source>
</reference>
<feature type="chain" id="PRO_1000191625" description="Malate dehydrogenase">
    <location>
        <begin position="1"/>
        <end position="328"/>
    </location>
</feature>
<feature type="active site" description="Proton acceptor" evidence="1">
    <location>
        <position position="190"/>
    </location>
</feature>
<feature type="binding site" evidence="1">
    <location>
        <begin position="12"/>
        <end position="18"/>
    </location>
    <ligand>
        <name>NAD(+)</name>
        <dbReference type="ChEBI" id="CHEBI:57540"/>
    </ligand>
</feature>
<feature type="binding site" evidence="1">
    <location>
        <position position="95"/>
    </location>
    <ligand>
        <name>substrate</name>
    </ligand>
</feature>
<feature type="binding site" evidence="1">
    <location>
        <position position="101"/>
    </location>
    <ligand>
        <name>substrate</name>
    </ligand>
</feature>
<feature type="binding site" evidence="1">
    <location>
        <position position="108"/>
    </location>
    <ligand>
        <name>NAD(+)</name>
        <dbReference type="ChEBI" id="CHEBI:57540"/>
    </ligand>
</feature>
<feature type="binding site" evidence="1">
    <location>
        <position position="115"/>
    </location>
    <ligand>
        <name>NAD(+)</name>
        <dbReference type="ChEBI" id="CHEBI:57540"/>
    </ligand>
</feature>
<feature type="binding site" evidence="1">
    <location>
        <begin position="132"/>
        <end position="134"/>
    </location>
    <ligand>
        <name>NAD(+)</name>
        <dbReference type="ChEBI" id="CHEBI:57540"/>
    </ligand>
</feature>
<feature type="binding site" evidence="1">
    <location>
        <position position="134"/>
    </location>
    <ligand>
        <name>substrate</name>
    </ligand>
</feature>
<feature type="binding site" evidence="1">
    <location>
        <position position="165"/>
    </location>
    <ligand>
        <name>substrate</name>
    </ligand>
</feature>
<proteinExistence type="inferred from homology"/>